<organism>
    <name type="scientific">Helicobacter pylori (strain G27)</name>
    <dbReference type="NCBI Taxonomy" id="563041"/>
    <lineage>
        <taxon>Bacteria</taxon>
        <taxon>Pseudomonadati</taxon>
        <taxon>Campylobacterota</taxon>
        <taxon>Epsilonproteobacteria</taxon>
        <taxon>Campylobacterales</taxon>
        <taxon>Helicobacteraceae</taxon>
        <taxon>Helicobacter</taxon>
    </lineage>
</organism>
<proteinExistence type="inferred from homology"/>
<gene>
    <name evidence="1" type="primary">atpE</name>
    <name type="ordered locus">HPG27_1158</name>
</gene>
<protein>
    <recommendedName>
        <fullName evidence="1">ATP synthase subunit c</fullName>
    </recommendedName>
    <alternativeName>
        <fullName evidence="1">ATP synthase F(0) sector subunit c</fullName>
    </alternativeName>
    <alternativeName>
        <fullName evidence="1">F-type ATPase subunit c</fullName>
        <shortName evidence="1">F-ATPase subunit c</shortName>
    </alternativeName>
    <alternativeName>
        <fullName evidence="1">Lipid-binding protein</fullName>
    </alternativeName>
</protein>
<name>ATPL_HELPG</name>
<accession>B5Z8K9</accession>
<reference key="1">
    <citation type="journal article" date="2009" name="J. Bacteriol.">
        <title>The complete genome sequence of Helicobacter pylori strain G27.</title>
        <authorList>
            <person name="Baltrus D.A."/>
            <person name="Amieva M.R."/>
            <person name="Covacci A."/>
            <person name="Lowe T.M."/>
            <person name="Merrell D.S."/>
            <person name="Ottemann K.M."/>
            <person name="Stein M."/>
            <person name="Salama N.R."/>
            <person name="Guillemin K."/>
        </authorList>
    </citation>
    <scope>NUCLEOTIDE SEQUENCE [LARGE SCALE GENOMIC DNA]</scope>
    <source>
        <strain>G27</strain>
    </source>
</reference>
<sequence length="105" mass="10658">MKFLALFFLALAGVAFAHDGGMGGMDMIKSYSILGAMIGLGIAAFGGAIGMGNAAAATITGTARNPGVGGKLLTTMFVAMAMIEAQVIYTLVFAIIAIYSNPFLS</sequence>
<feature type="chain" id="PRO_1000184394" description="ATP synthase subunit c">
    <location>
        <begin position="1"/>
        <end position="105"/>
    </location>
</feature>
<feature type="transmembrane region" description="Helical" evidence="1">
    <location>
        <begin position="3"/>
        <end position="23"/>
    </location>
</feature>
<feature type="transmembrane region" description="Helical" evidence="1">
    <location>
        <begin position="32"/>
        <end position="52"/>
    </location>
</feature>
<feature type="transmembrane region" description="Helical" evidence="1">
    <location>
        <begin position="78"/>
        <end position="98"/>
    </location>
</feature>
<feature type="site" description="Reversibly protonated during proton transport" evidence="1">
    <location>
        <position position="84"/>
    </location>
</feature>
<comment type="function">
    <text evidence="1">F(1)F(0) ATP synthase produces ATP from ADP in the presence of a proton or sodium gradient. F-type ATPases consist of two structural domains, F(1) containing the extramembraneous catalytic core and F(0) containing the membrane proton channel, linked together by a central stalk and a peripheral stalk. During catalysis, ATP synthesis in the catalytic domain of F(1) is coupled via a rotary mechanism of the central stalk subunits to proton translocation.</text>
</comment>
<comment type="function">
    <text evidence="1">Key component of the F(0) channel; it plays a direct role in translocation across the membrane. A homomeric c-ring of between 10-14 subunits forms the central stalk rotor element with the F(1) delta and epsilon subunits.</text>
</comment>
<comment type="subunit">
    <text evidence="1">F-type ATPases have 2 components, F(1) - the catalytic core - and F(0) - the membrane proton channel. F(1) has five subunits: alpha(3), beta(3), gamma(1), delta(1), epsilon(1). F(0) has three main subunits: a(1), b(2) and c(10-14). The alpha and beta chains form an alternating ring which encloses part of the gamma chain. F(1) is attached to F(0) by a central stalk formed by the gamma and epsilon chains, while a peripheral stalk is formed by the delta and b chains.</text>
</comment>
<comment type="subcellular location">
    <subcellularLocation>
        <location evidence="1">Cell inner membrane</location>
        <topology evidence="1">Multi-pass membrane protein</topology>
    </subcellularLocation>
</comment>
<comment type="similarity">
    <text evidence="1">Belongs to the ATPase C chain family.</text>
</comment>
<keyword id="KW-0066">ATP synthesis</keyword>
<keyword id="KW-0997">Cell inner membrane</keyword>
<keyword id="KW-1003">Cell membrane</keyword>
<keyword id="KW-0138">CF(0)</keyword>
<keyword id="KW-0375">Hydrogen ion transport</keyword>
<keyword id="KW-0406">Ion transport</keyword>
<keyword id="KW-0446">Lipid-binding</keyword>
<keyword id="KW-0472">Membrane</keyword>
<keyword id="KW-1185">Reference proteome</keyword>
<keyword id="KW-0812">Transmembrane</keyword>
<keyword id="KW-1133">Transmembrane helix</keyword>
<keyword id="KW-0813">Transport</keyword>
<dbReference type="EMBL" id="CP001173">
    <property type="protein sequence ID" value="ACI27908.1"/>
    <property type="molecule type" value="Genomic_DNA"/>
</dbReference>
<dbReference type="RefSeq" id="WP_000669961.1">
    <property type="nucleotide sequence ID" value="NC_011333.1"/>
</dbReference>
<dbReference type="SMR" id="B5Z8K9"/>
<dbReference type="KEGG" id="hpg:HPG27_1158"/>
<dbReference type="HOGENOM" id="CLU_148047_0_1_7"/>
<dbReference type="Proteomes" id="UP000001735">
    <property type="component" value="Chromosome"/>
</dbReference>
<dbReference type="GO" id="GO:0005886">
    <property type="term" value="C:plasma membrane"/>
    <property type="evidence" value="ECO:0007669"/>
    <property type="project" value="UniProtKB-SubCell"/>
</dbReference>
<dbReference type="GO" id="GO:0045259">
    <property type="term" value="C:proton-transporting ATP synthase complex"/>
    <property type="evidence" value="ECO:0007669"/>
    <property type="project" value="UniProtKB-KW"/>
</dbReference>
<dbReference type="GO" id="GO:0033177">
    <property type="term" value="C:proton-transporting two-sector ATPase complex, proton-transporting domain"/>
    <property type="evidence" value="ECO:0007669"/>
    <property type="project" value="InterPro"/>
</dbReference>
<dbReference type="GO" id="GO:0008289">
    <property type="term" value="F:lipid binding"/>
    <property type="evidence" value="ECO:0007669"/>
    <property type="project" value="UniProtKB-KW"/>
</dbReference>
<dbReference type="GO" id="GO:0046933">
    <property type="term" value="F:proton-transporting ATP synthase activity, rotational mechanism"/>
    <property type="evidence" value="ECO:0007669"/>
    <property type="project" value="UniProtKB-UniRule"/>
</dbReference>
<dbReference type="CDD" id="cd18121">
    <property type="entry name" value="ATP-synt_Fo_c"/>
    <property type="match status" value="1"/>
</dbReference>
<dbReference type="Gene3D" id="1.20.20.10">
    <property type="entry name" value="F1F0 ATP synthase subunit C"/>
    <property type="match status" value="1"/>
</dbReference>
<dbReference type="HAMAP" id="MF_01396">
    <property type="entry name" value="ATP_synth_c_bact"/>
    <property type="match status" value="1"/>
</dbReference>
<dbReference type="InterPro" id="IPR000454">
    <property type="entry name" value="ATP_synth_F0_csu"/>
</dbReference>
<dbReference type="InterPro" id="IPR020537">
    <property type="entry name" value="ATP_synth_F0_csu_DDCD_BS"/>
</dbReference>
<dbReference type="InterPro" id="IPR038662">
    <property type="entry name" value="ATP_synth_F0_csu_sf"/>
</dbReference>
<dbReference type="InterPro" id="IPR002379">
    <property type="entry name" value="ATPase_proteolipid_c-like_dom"/>
</dbReference>
<dbReference type="InterPro" id="IPR035921">
    <property type="entry name" value="F/V-ATP_Csub_sf"/>
</dbReference>
<dbReference type="NCBIfam" id="NF006295">
    <property type="entry name" value="PRK08482.1"/>
    <property type="match status" value="1"/>
</dbReference>
<dbReference type="Pfam" id="PF00137">
    <property type="entry name" value="ATP-synt_C"/>
    <property type="match status" value="1"/>
</dbReference>
<dbReference type="PRINTS" id="PR00124">
    <property type="entry name" value="ATPASEC"/>
</dbReference>
<dbReference type="SUPFAM" id="SSF81333">
    <property type="entry name" value="F1F0 ATP synthase subunit C"/>
    <property type="match status" value="1"/>
</dbReference>
<dbReference type="PROSITE" id="PS00605">
    <property type="entry name" value="ATPASE_C"/>
    <property type="match status" value="1"/>
</dbReference>
<evidence type="ECO:0000255" key="1">
    <source>
        <dbReference type="HAMAP-Rule" id="MF_01396"/>
    </source>
</evidence>